<sequence>MSFLNVFSSRPTPKQVAKDRLKVILIHDRGELSDEVLDKIRLEILDVLSKYVEIENEDVDITVTKSNPIEGESPSLVANIPIKNIKGKAR</sequence>
<dbReference type="EMBL" id="CP000246">
    <property type="protein sequence ID" value="ABG82739.1"/>
    <property type="molecule type" value="Genomic_DNA"/>
</dbReference>
<dbReference type="RefSeq" id="WP_003452508.1">
    <property type="nucleotide sequence ID" value="NC_008261.1"/>
</dbReference>
<dbReference type="STRING" id="195103.CPF_2392"/>
<dbReference type="PaxDb" id="195103-CPF_2392"/>
<dbReference type="GeneID" id="93001329"/>
<dbReference type="KEGG" id="cpf:CPF_2392"/>
<dbReference type="eggNOG" id="COG0851">
    <property type="taxonomic scope" value="Bacteria"/>
</dbReference>
<dbReference type="HOGENOM" id="CLU_137929_1_0_9"/>
<dbReference type="Proteomes" id="UP000001823">
    <property type="component" value="Chromosome"/>
</dbReference>
<dbReference type="GO" id="GO:0051301">
    <property type="term" value="P:cell division"/>
    <property type="evidence" value="ECO:0007669"/>
    <property type="project" value="UniProtKB-KW"/>
</dbReference>
<dbReference type="GO" id="GO:0032955">
    <property type="term" value="P:regulation of division septum assembly"/>
    <property type="evidence" value="ECO:0007669"/>
    <property type="project" value="InterPro"/>
</dbReference>
<dbReference type="Gene3D" id="3.30.1070.10">
    <property type="entry name" value="Cell division topological specificity factor MinE"/>
    <property type="match status" value="1"/>
</dbReference>
<dbReference type="HAMAP" id="MF_00262">
    <property type="entry name" value="MinE"/>
    <property type="match status" value="1"/>
</dbReference>
<dbReference type="InterPro" id="IPR005527">
    <property type="entry name" value="MinE"/>
</dbReference>
<dbReference type="InterPro" id="IPR036707">
    <property type="entry name" value="MinE_sf"/>
</dbReference>
<dbReference type="NCBIfam" id="TIGR01215">
    <property type="entry name" value="minE"/>
    <property type="match status" value="1"/>
</dbReference>
<dbReference type="Pfam" id="PF03776">
    <property type="entry name" value="MinE"/>
    <property type="match status" value="1"/>
</dbReference>
<dbReference type="SUPFAM" id="SSF55229">
    <property type="entry name" value="Cell division protein MinE topological specificity domain"/>
    <property type="match status" value="1"/>
</dbReference>
<proteinExistence type="inferred from homology"/>
<keyword id="KW-0131">Cell cycle</keyword>
<keyword id="KW-0132">Cell division</keyword>
<feature type="chain" id="PRO_0000298102" description="Cell division topological specificity factor">
    <location>
        <begin position="1"/>
        <end position="90"/>
    </location>
</feature>
<protein>
    <recommendedName>
        <fullName evidence="1">Cell division topological specificity factor</fullName>
    </recommendedName>
</protein>
<organism>
    <name type="scientific">Clostridium perfringens (strain ATCC 13124 / DSM 756 / JCM 1290 / NCIMB 6125 / NCTC 8237 / Type A)</name>
    <dbReference type="NCBI Taxonomy" id="195103"/>
    <lineage>
        <taxon>Bacteria</taxon>
        <taxon>Bacillati</taxon>
        <taxon>Bacillota</taxon>
        <taxon>Clostridia</taxon>
        <taxon>Eubacteriales</taxon>
        <taxon>Clostridiaceae</taxon>
        <taxon>Clostridium</taxon>
    </lineage>
</organism>
<comment type="function">
    <text evidence="1">Prevents the cell division inhibition by proteins MinC and MinD at internal division sites while permitting inhibition at polar sites. This ensures cell division at the proper site by restricting the formation of a division septum at the midpoint of the long axis of the cell.</text>
</comment>
<comment type="similarity">
    <text evidence="1">Belongs to the MinE family.</text>
</comment>
<gene>
    <name evidence="1" type="primary">minE</name>
    <name type="ordered locus">CPF_2392</name>
</gene>
<reference key="1">
    <citation type="journal article" date="2006" name="Genome Res.">
        <title>Skewed genomic variability in strains of the toxigenic bacterial pathogen, Clostridium perfringens.</title>
        <authorList>
            <person name="Myers G.S.A."/>
            <person name="Rasko D.A."/>
            <person name="Cheung J.K."/>
            <person name="Ravel J."/>
            <person name="Seshadri R."/>
            <person name="DeBoy R.T."/>
            <person name="Ren Q."/>
            <person name="Varga J."/>
            <person name="Awad M.M."/>
            <person name="Brinkac L.M."/>
            <person name="Daugherty S.C."/>
            <person name="Haft D.H."/>
            <person name="Dodson R.J."/>
            <person name="Madupu R."/>
            <person name="Nelson W.C."/>
            <person name="Rosovitz M.J."/>
            <person name="Sullivan S.A."/>
            <person name="Khouri H."/>
            <person name="Dimitrov G.I."/>
            <person name="Watkins K.L."/>
            <person name="Mulligan S."/>
            <person name="Benton J."/>
            <person name="Radune D."/>
            <person name="Fisher D.J."/>
            <person name="Atkins H.S."/>
            <person name="Hiscox T."/>
            <person name="Jost B.H."/>
            <person name="Billington S.J."/>
            <person name="Songer J.G."/>
            <person name="McClane B.A."/>
            <person name="Titball R.W."/>
            <person name="Rood J.I."/>
            <person name="Melville S.B."/>
            <person name="Paulsen I.T."/>
        </authorList>
    </citation>
    <scope>NUCLEOTIDE SEQUENCE [LARGE SCALE GENOMIC DNA]</scope>
    <source>
        <strain>ATCC 13124 / DSM 756 / JCM 1290 / NCIMB 6125 / NCTC 8237 / S 107 / Type A</strain>
    </source>
</reference>
<name>MINE_CLOP1</name>
<evidence type="ECO:0000255" key="1">
    <source>
        <dbReference type="HAMAP-Rule" id="MF_00262"/>
    </source>
</evidence>
<accession>Q0TNH5</accession>